<keyword id="KW-0119">Carbohydrate metabolism</keyword>
<keyword id="KW-0133">Cell shape</keyword>
<keyword id="KW-0961">Cell wall biogenesis/degradation</keyword>
<keyword id="KW-0460">Magnesium</keyword>
<keyword id="KW-0479">Metal-binding</keyword>
<keyword id="KW-0548">Nucleotidyltransferase</keyword>
<keyword id="KW-0573">Peptidoglycan synthesis</keyword>
<keyword id="KW-1185">Reference proteome</keyword>
<keyword id="KW-0808">Transferase</keyword>
<proteinExistence type="inferred from homology"/>
<evidence type="ECO:0000250" key="1">
    <source>
        <dbReference type="UniProtKB" id="Q88QT2"/>
    </source>
</evidence>
<evidence type="ECO:0000269" key="2">
    <source>
    </source>
</evidence>
<evidence type="ECO:0000305" key="3"/>
<evidence type="ECO:0000305" key="4">
    <source>
    </source>
</evidence>
<evidence type="ECO:0000312" key="5">
    <source>
        <dbReference type="EMBL" id="AAF42176.1"/>
    </source>
</evidence>
<sequence>MKAMILAAGRGERMRPLTDTTPKPLLDVAGKPLIGWHLCRLKQAGFTEIVINHAWLGRQIEDALGDGSAYGVNIAYSPEPAGGLETAGGIAQALPLLGGQPFLVVNGDVLTDIDFTAAFQTASSLPEHISAHLWLVENPPHNPDGDFSLLPDSSVRPEVNGGNGLTFSGVGIYRPEMFDGIEAGSVAKLAPVLRGEMRQNRVSGQKHTGLWLDVGTVCRLKEAQALAGAWK</sequence>
<feature type="chain" id="PRO_0000441271" description="N-acetylmuramate alpha-1-phosphate uridylyltransferase">
    <location>
        <begin position="1"/>
        <end position="231"/>
    </location>
</feature>
<feature type="binding site" evidence="1">
    <location>
        <begin position="11"/>
        <end position="13"/>
    </location>
    <ligand>
        <name>UTP</name>
        <dbReference type="ChEBI" id="CHEBI:46398"/>
    </ligand>
</feature>
<feature type="binding site" evidence="1">
    <location>
        <position position="23"/>
    </location>
    <ligand>
        <name>UTP</name>
        <dbReference type="ChEBI" id="CHEBI:46398"/>
    </ligand>
</feature>
<feature type="binding site" evidence="1">
    <location>
        <position position="106"/>
    </location>
    <ligand>
        <name>substrate</name>
    </ligand>
</feature>
<feature type="binding site" evidence="1">
    <location>
        <position position="108"/>
    </location>
    <ligand>
        <name>Mg(2+)</name>
        <dbReference type="ChEBI" id="CHEBI:18420"/>
    </ligand>
</feature>
<feature type="binding site" evidence="1">
    <location>
        <position position="146"/>
    </location>
    <ligand>
        <name>substrate</name>
    </ligand>
</feature>
<feature type="binding site" evidence="1">
    <location>
        <position position="213"/>
    </location>
    <ligand>
        <name>Mg(2+)</name>
        <dbReference type="ChEBI" id="CHEBI:18420"/>
    </ligand>
</feature>
<feature type="binding site" evidence="1">
    <location>
        <position position="213"/>
    </location>
    <ligand>
        <name>substrate</name>
    </ligand>
</feature>
<organism>
    <name type="scientific">Neisseria meningitidis serogroup B (strain ATCC BAA-335 / MC58)</name>
    <dbReference type="NCBI Taxonomy" id="122586"/>
    <lineage>
        <taxon>Bacteria</taxon>
        <taxon>Pseudomonadati</taxon>
        <taxon>Pseudomonadota</taxon>
        <taxon>Betaproteobacteria</taxon>
        <taxon>Neisseriales</taxon>
        <taxon>Neisseriaceae</taxon>
        <taxon>Neisseria</taxon>
    </lineage>
</organism>
<gene>
    <name evidence="1" type="primary">murU</name>
    <name evidence="5" type="ordered locus">NMB1841</name>
</gene>
<name>MURU_NEIMB</name>
<reference key="1">
    <citation type="journal article" date="2000" name="Science">
        <title>Complete genome sequence of Neisseria meningitidis serogroup B strain MC58.</title>
        <authorList>
            <person name="Tettelin H."/>
            <person name="Saunders N.J."/>
            <person name="Heidelberg J.F."/>
            <person name="Jeffries A.C."/>
            <person name="Nelson K.E."/>
            <person name="Eisen J.A."/>
            <person name="Ketchum K.A."/>
            <person name="Hood D.W."/>
            <person name="Peden J.F."/>
            <person name="Dodson R.J."/>
            <person name="Nelson W.C."/>
            <person name="Gwinn M.L."/>
            <person name="DeBoy R.T."/>
            <person name="Peterson J.D."/>
            <person name="Hickey E.K."/>
            <person name="Haft D.H."/>
            <person name="Salzberg S.L."/>
            <person name="White O."/>
            <person name="Fleischmann R.D."/>
            <person name="Dougherty B.A."/>
            <person name="Mason T.M."/>
            <person name="Ciecko A."/>
            <person name="Parksey D.S."/>
            <person name="Blair E."/>
            <person name="Cittone H."/>
            <person name="Clark E.B."/>
            <person name="Cotton M.D."/>
            <person name="Utterback T.R."/>
            <person name="Khouri H.M."/>
            <person name="Qin H."/>
            <person name="Vamathevan J.J."/>
            <person name="Gill J."/>
            <person name="Scarlato V."/>
            <person name="Masignani V."/>
            <person name="Pizza M."/>
            <person name="Grandi G."/>
            <person name="Sun L."/>
            <person name="Smith H.O."/>
            <person name="Fraser C.M."/>
            <person name="Moxon E.R."/>
            <person name="Rappuoli R."/>
            <person name="Venter J.C."/>
        </authorList>
    </citation>
    <scope>NUCLEOTIDE SEQUENCE [LARGE SCALE GENOMIC DNA]</scope>
    <source>
        <strain>ATCC BAA-335 / MC58</strain>
    </source>
</reference>
<reference key="2">
    <citation type="journal article" date="2013" name="Nat. Chem. Biol.">
        <title>A cell wall recycling shortcut that bypasses peptidoglycan de novo biosynthesis.</title>
        <authorList>
            <person name="Gisin J."/>
            <person name="Schneider A."/>
            <person name="Naegele B."/>
            <person name="Borisova M."/>
            <person name="Mayer C."/>
        </authorList>
    </citation>
    <scope>FUNCTION</scope>
    <scope>PATHWAY</scope>
    <source>
        <strain>ATCC BAA-335 / MC58</strain>
    </source>
</reference>
<protein>
    <recommendedName>
        <fullName evidence="1">N-acetylmuramate alpha-1-phosphate uridylyltransferase</fullName>
        <shortName evidence="1">MurNAc-1P uridylyltransferase</shortName>
        <shortName evidence="1">MurNAc-alpha-1P uridylyltransferase</shortName>
        <ecNumber evidence="1">2.7.7.99</ecNumber>
    </recommendedName>
</protein>
<comment type="function">
    <text evidence="1 2">Catalyzes the formation of UDP-N-acetylmuramate (UDP-MurNAc), a crucial precursor of the bacterial peptidoglycan cell wall, from UTP and MurNAc-alpha-1P. Is likely involved in peptidoglycan recycling as part of a cell wall recycling pathway that bypasses de novo biosynthesis of the peptidoglycan precursor UDP-MurNAc (PubMed:23831760). Is able to complement the fosfomycin sensitivity phenotype of a P.putida mutant lacking murU (PubMed:23831760).</text>
</comment>
<comment type="catalytic activity">
    <reaction evidence="1">
        <text>N-acetyl-alpha-D-muramate 1-phosphate + UDP + H(+) = UDP-N-acetyl-alpha-D-muramate + phosphate</text>
        <dbReference type="Rhea" id="RHEA:53716"/>
        <dbReference type="ChEBI" id="CHEBI:15378"/>
        <dbReference type="ChEBI" id="CHEBI:43474"/>
        <dbReference type="ChEBI" id="CHEBI:58223"/>
        <dbReference type="ChEBI" id="CHEBI:70757"/>
        <dbReference type="ChEBI" id="CHEBI:137594"/>
        <dbReference type="EC" id="2.7.7.99"/>
    </reaction>
</comment>
<comment type="cofactor">
    <cofactor evidence="1">
        <name>Mg(2+)</name>
        <dbReference type="ChEBI" id="CHEBI:18420"/>
    </cofactor>
</comment>
<comment type="pathway">
    <text evidence="4">Cell wall biogenesis; peptidoglycan recycling.</text>
</comment>
<comment type="subunit">
    <text evidence="1">Monomer.</text>
</comment>
<comment type="similarity">
    <text evidence="3">Belongs to the nucleotidyltransferase MurU family.</text>
</comment>
<dbReference type="EC" id="2.7.7.99" evidence="1"/>
<dbReference type="EMBL" id="AE002098">
    <property type="protein sequence ID" value="AAF42176.1"/>
    <property type="molecule type" value="Genomic_DNA"/>
</dbReference>
<dbReference type="PIR" id="A81036">
    <property type="entry name" value="A81036"/>
</dbReference>
<dbReference type="RefSeq" id="NP_274838.1">
    <property type="nucleotide sequence ID" value="NC_003112.2"/>
</dbReference>
<dbReference type="RefSeq" id="WP_002225669.1">
    <property type="nucleotide sequence ID" value="NC_003112.2"/>
</dbReference>
<dbReference type="SMR" id="Q9JXY0"/>
<dbReference type="STRING" id="122586.NMB1841"/>
<dbReference type="PaxDb" id="122586-NMB1841"/>
<dbReference type="KEGG" id="nme:NMB1841"/>
<dbReference type="PATRIC" id="fig|122586.8.peg.2350"/>
<dbReference type="HOGENOM" id="CLU_029499_2_1_4"/>
<dbReference type="InParanoid" id="Q9JXY0"/>
<dbReference type="OrthoDB" id="9788272at2"/>
<dbReference type="UniPathway" id="UPA00544"/>
<dbReference type="Proteomes" id="UP000000425">
    <property type="component" value="Chromosome"/>
</dbReference>
<dbReference type="GO" id="GO:0046872">
    <property type="term" value="F:metal ion binding"/>
    <property type="evidence" value="ECO:0007669"/>
    <property type="project" value="UniProtKB-KW"/>
</dbReference>
<dbReference type="GO" id="GO:0016779">
    <property type="term" value="F:nucleotidyltransferase activity"/>
    <property type="evidence" value="ECO:0007669"/>
    <property type="project" value="UniProtKB-KW"/>
</dbReference>
<dbReference type="GO" id="GO:0071555">
    <property type="term" value="P:cell wall organization"/>
    <property type="evidence" value="ECO:0007669"/>
    <property type="project" value="UniProtKB-KW"/>
</dbReference>
<dbReference type="GO" id="GO:0009252">
    <property type="term" value="P:peptidoglycan biosynthetic process"/>
    <property type="evidence" value="ECO:0007669"/>
    <property type="project" value="UniProtKB-KW"/>
</dbReference>
<dbReference type="GO" id="GO:0009254">
    <property type="term" value="P:peptidoglycan turnover"/>
    <property type="evidence" value="ECO:0007669"/>
    <property type="project" value="UniProtKB-UniPathway"/>
</dbReference>
<dbReference type="GO" id="GO:0008360">
    <property type="term" value="P:regulation of cell shape"/>
    <property type="evidence" value="ECO:0007669"/>
    <property type="project" value="UniProtKB-KW"/>
</dbReference>
<dbReference type="CDD" id="cd06422">
    <property type="entry name" value="NTP_transferase_like_1"/>
    <property type="match status" value="1"/>
</dbReference>
<dbReference type="Gene3D" id="3.90.550.10">
    <property type="entry name" value="Spore Coat Polysaccharide Biosynthesis Protein SpsA, Chain A"/>
    <property type="match status" value="1"/>
</dbReference>
<dbReference type="InterPro" id="IPR050065">
    <property type="entry name" value="GlmU-like"/>
</dbReference>
<dbReference type="InterPro" id="IPR054790">
    <property type="entry name" value="MurU"/>
</dbReference>
<dbReference type="InterPro" id="IPR005835">
    <property type="entry name" value="NTP_transferase_dom"/>
</dbReference>
<dbReference type="InterPro" id="IPR029044">
    <property type="entry name" value="Nucleotide-diphossugar_trans"/>
</dbReference>
<dbReference type="NCBIfam" id="NF045761">
    <property type="entry name" value="NAMPUrTaseMurU"/>
    <property type="match status" value="1"/>
</dbReference>
<dbReference type="PANTHER" id="PTHR43584:SF8">
    <property type="entry name" value="N-ACETYLMURAMATE ALPHA-1-PHOSPHATE URIDYLYLTRANSFERASE"/>
    <property type="match status" value="1"/>
</dbReference>
<dbReference type="PANTHER" id="PTHR43584">
    <property type="entry name" value="NUCLEOTIDYL TRANSFERASE"/>
    <property type="match status" value="1"/>
</dbReference>
<dbReference type="Pfam" id="PF00483">
    <property type="entry name" value="NTP_transferase"/>
    <property type="match status" value="1"/>
</dbReference>
<dbReference type="SUPFAM" id="SSF53448">
    <property type="entry name" value="Nucleotide-diphospho-sugar transferases"/>
    <property type="match status" value="1"/>
</dbReference>
<accession>Q9JXY0</accession>